<dbReference type="EMBL" id="AF404856">
    <property type="protein sequence ID" value="AAK96194.1"/>
    <property type="molecule type" value="mRNA"/>
</dbReference>
<dbReference type="EMBL" id="AL080283">
    <property type="protein sequence ID" value="CAB45914.1"/>
    <property type="molecule type" value="Genomic_DNA"/>
</dbReference>
<dbReference type="EMBL" id="AL161579">
    <property type="protein sequence ID" value="CAB79873.1"/>
    <property type="molecule type" value="Genomic_DNA"/>
</dbReference>
<dbReference type="EMBL" id="CP002687">
    <property type="protein sequence ID" value="AEE85927.1"/>
    <property type="molecule type" value="Genomic_DNA"/>
</dbReference>
<dbReference type="EMBL" id="CP002687">
    <property type="protein sequence ID" value="AEE85928.1"/>
    <property type="molecule type" value="Genomic_DNA"/>
</dbReference>
<dbReference type="EMBL" id="AY059731">
    <property type="protein sequence ID" value="AAL24088.1"/>
    <property type="molecule type" value="mRNA"/>
</dbReference>
<dbReference type="EMBL" id="AY150394">
    <property type="protein sequence ID" value="AAN12939.1"/>
    <property type="molecule type" value="mRNA"/>
</dbReference>
<dbReference type="EMBL" id="BT001100">
    <property type="protein sequence ID" value="AAN64164.1"/>
    <property type="molecule type" value="mRNA"/>
</dbReference>
<dbReference type="EMBL" id="AY084855">
    <property type="protein sequence ID" value="AAM61419.1"/>
    <property type="molecule type" value="mRNA"/>
</dbReference>
<dbReference type="PIR" id="T10685">
    <property type="entry name" value="T10685"/>
</dbReference>
<dbReference type="RefSeq" id="NP_567878.2">
    <molecule id="Q9SV15-2"/>
    <property type="nucleotide sequence ID" value="NM_119304.4"/>
</dbReference>
<dbReference type="RefSeq" id="NP_849559.1">
    <molecule id="Q9SV15-1"/>
    <property type="nucleotide sequence ID" value="NM_179228.2"/>
</dbReference>
<dbReference type="PDB" id="8IEX">
    <property type="method" value="NMR"/>
    <property type="chains" value="A=223-308"/>
</dbReference>
<dbReference type="PDBsum" id="8IEX"/>
<dbReference type="SMR" id="Q9SV15"/>
<dbReference type="BioGRID" id="14568">
    <property type="interactions" value="4"/>
</dbReference>
<dbReference type="FunCoup" id="Q9SV15">
    <property type="interactions" value="262"/>
</dbReference>
<dbReference type="IntAct" id="Q9SV15">
    <property type="interactions" value="4"/>
</dbReference>
<dbReference type="MINT" id="Q9SV15"/>
<dbReference type="STRING" id="3702.Q9SV15"/>
<dbReference type="iPTMnet" id="Q9SV15"/>
<dbReference type="PaxDb" id="3702-AT4G31550.1"/>
<dbReference type="ProteomicsDB" id="234257">
    <molecule id="Q9SV15-1"/>
</dbReference>
<dbReference type="EnsemblPlants" id="AT4G31550.1">
    <molecule id="Q9SV15-1"/>
    <property type="protein sequence ID" value="AT4G31550.1"/>
    <property type="gene ID" value="AT4G31550"/>
</dbReference>
<dbReference type="EnsemblPlants" id="AT4G31550.2">
    <molecule id="Q9SV15-2"/>
    <property type="protein sequence ID" value="AT4G31550.2"/>
    <property type="gene ID" value="AT4G31550"/>
</dbReference>
<dbReference type="GeneID" id="829282"/>
<dbReference type="Gramene" id="AT4G31550.1">
    <molecule id="Q9SV15-1"/>
    <property type="protein sequence ID" value="AT4G31550.1"/>
    <property type="gene ID" value="AT4G31550"/>
</dbReference>
<dbReference type="Gramene" id="AT4G31550.2">
    <molecule id="Q9SV15-2"/>
    <property type="protein sequence ID" value="AT4G31550.2"/>
    <property type="gene ID" value="AT4G31550"/>
</dbReference>
<dbReference type="KEGG" id="ath:AT4G31550"/>
<dbReference type="Araport" id="AT4G31550"/>
<dbReference type="TAIR" id="AT4G31550">
    <property type="gene designation" value="WRKY11"/>
</dbReference>
<dbReference type="eggNOG" id="ENOG502QR3I">
    <property type="taxonomic scope" value="Eukaryota"/>
</dbReference>
<dbReference type="InParanoid" id="Q9SV15"/>
<dbReference type="OrthoDB" id="777189at2759"/>
<dbReference type="PhylomeDB" id="Q9SV15"/>
<dbReference type="PRO" id="PR:Q9SV15"/>
<dbReference type="Proteomes" id="UP000006548">
    <property type="component" value="Chromosome 4"/>
</dbReference>
<dbReference type="ExpressionAtlas" id="Q9SV15">
    <property type="expression patterns" value="baseline and differential"/>
</dbReference>
<dbReference type="GO" id="GO:0005634">
    <property type="term" value="C:nucleus"/>
    <property type="evidence" value="ECO:0000314"/>
    <property type="project" value="UniProtKB"/>
</dbReference>
<dbReference type="GO" id="GO:0005516">
    <property type="term" value="F:calmodulin binding"/>
    <property type="evidence" value="ECO:0000314"/>
    <property type="project" value="TAIR"/>
</dbReference>
<dbReference type="GO" id="GO:0003700">
    <property type="term" value="F:DNA-binding transcription factor activity"/>
    <property type="evidence" value="ECO:0000250"/>
    <property type="project" value="TAIR"/>
</dbReference>
<dbReference type="GO" id="GO:0000976">
    <property type="term" value="F:transcription cis-regulatory region binding"/>
    <property type="evidence" value="ECO:0000353"/>
    <property type="project" value="TAIR"/>
</dbReference>
<dbReference type="GO" id="GO:0042742">
    <property type="term" value="P:defense response to bacterium"/>
    <property type="evidence" value="ECO:0000315"/>
    <property type="project" value="UniProtKB"/>
</dbReference>
<dbReference type="GO" id="GO:0009682">
    <property type="term" value="P:induced systemic resistance"/>
    <property type="evidence" value="ECO:0000315"/>
    <property type="project" value="UniProtKB"/>
</dbReference>
<dbReference type="GO" id="GO:2000022">
    <property type="term" value="P:regulation of jasmonic acid mediated signaling pathway"/>
    <property type="evidence" value="ECO:0000314"/>
    <property type="project" value="UniProtKB"/>
</dbReference>
<dbReference type="GO" id="GO:0009617">
    <property type="term" value="P:response to bacterium"/>
    <property type="evidence" value="ECO:0000270"/>
    <property type="project" value="UniProtKB"/>
</dbReference>
<dbReference type="FunFam" id="2.20.25.80:FF:000004">
    <property type="entry name" value="WRKY transcription factor 65"/>
    <property type="match status" value="1"/>
</dbReference>
<dbReference type="Gene3D" id="2.20.25.80">
    <property type="entry name" value="WRKY domain"/>
    <property type="match status" value="1"/>
</dbReference>
<dbReference type="InterPro" id="IPR003657">
    <property type="entry name" value="WRKY_dom"/>
</dbReference>
<dbReference type="InterPro" id="IPR036576">
    <property type="entry name" value="WRKY_dom_sf"/>
</dbReference>
<dbReference type="InterPro" id="IPR044810">
    <property type="entry name" value="WRKY_plant"/>
</dbReference>
<dbReference type="InterPro" id="IPR018872">
    <property type="entry name" value="Zn-cluster-dom"/>
</dbReference>
<dbReference type="PANTHER" id="PTHR31282">
    <property type="entry name" value="WRKY TRANSCRIPTION FACTOR 21-RELATED"/>
    <property type="match status" value="1"/>
</dbReference>
<dbReference type="Pfam" id="PF10533">
    <property type="entry name" value="Plant_zn_clust"/>
    <property type="match status" value="1"/>
</dbReference>
<dbReference type="Pfam" id="PF03106">
    <property type="entry name" value="WRKY"/>
    <property type="match status" value="1"/>
</dbReference>
<dbReference type="SMART" id="SM00774">
    <property type="entry name" value="WRKY"/>
    <property type="match status" value="1"/>
</dbReference>
<dbReference type="SUPFAM" id="SSF118290">
    <property type="entry name" value="WRKY DNA-binding domain"/>
    <property type="match status" value="1"/>
</dbReference>
<dbReference type="PROSITE" id="PS50811">
    <property type="entry name" value="WRKY"/>
    <property type="match status" value="1"/>
</dbReference>
<accession>Q9SV15</accession>
<accession>Q8H1G1</accession>
<accession>Q93YX0</accession>
<proteinExistence type="evidence at protein level"/>
<protein>
    <recommendedName>
        <fullName>Probable WRKY transcription factor 11</fullName>
    </recommendedName>
    <alternativeName>
        <fullName>WRKY DNA-binding protein 11</fullName>
    </alternativeName>
</protein>
<name>WRK11_ARATH</name>
<organism>
    <name type="scientific">Arabidopsis thaliana</name>
    <name type="common">Mouse-ear cress</name>
    <dbReference type="NCBI Taxonomy" id="3702"/>
    <lineage>
        <taxon>Eukaryota</taxon>
        <taxon>Viridiplantae</taxon>
        <taxon>Streptophyta</taxon>
        <taxon>Embryophyta</taxon>
        <taxon>Tracheophyta</taxon>
        <taxon>Spermatophyta</taxon>
        <taxon>Magnoliopsida</taxon>
        <taxon>eudicotyledons</taxon>
        <taxon>Gunneridae</taxon>
        <taxon>Pentapetalae</taxon>
        <taxon>rosids</taxon>
        <taxon>malvids</taxon>
        <taxon>Brassicales</taxon>
        <taxon>Brassicaceae</taxon>
        <taxon>Camelineae</taxon>
        <taxon>Arabidopsis</taxon>
    </lineage>
</organism>
<sequence>MAVDLMRFPKIDDQTAIQEAASQGLQSMEHLIRVLSNRPEQQHNVDCSEITDFTVSKFKTVISLLNRTGHARFRRGPVHSTSSAASQKLQSQIVKNTQPEAPIVRTTTNHPQIVPPPSSVTLDFSKPSIFGTKAKSAELEFSKENFSVSLNSSFMSSAITGDGSVSNGKIFLASAPLQPVNSSGKPPLAGHPYRKRCLEHEHSESFSGKVSGSAYGKCHCKKSRKNRMKRTVRVPAISAKIADIPPDEYSWRKYGQKPIKGSPHPRGYYKCSTFRGCPARKHVERALDDPAMLIVTYEGEHRHNQSAMQENISSSGINDLVFASA</sequence>
<keyword id="KW-0002">3D-structure</keyword>
<keyword id="KW-0025">Alternative splicing</keyword>
<keyword id="KW-0238">DNA-binding</keyword>
<keyword id="KW-1184">Jasmonic acid signaling pathway</keyword>
<keyword id="KW-0539">Nucleus</keyword>
<keyword id="KW-0611">Plant defense</keyword>
<keyword id="KW-1185">Reference proteome</keyword>
<keyword id="KW-0804">Transcription</keyword>
<keyword id="KW-0805">Transcription regulation</keyword>
<evidence type="ECO:0000250" key="1"/>
<evidence type="ECO:0000255" key="2">
    <source>
        <dbReference type="PROSITE-ProRule" id="PRU00223"/>
    </source>
</evidence>
<evidence type="ECO:0000269" key="3">
    <source>
    </source>
</evidence>
<evidence type="ECO:0000269" key="4">
    <source>
    </source>
</evidence>
<evidence type="ECO:0000303" key="5">
    <source>
    </source>
</evidence>
<evidence type="ECO:0000303" key="6">
    <source ref="5"/>
</evidence>
<evidence type="ECO:0000305" key="7"/>
<evidence type="ECO:0007829" key="8">
    <source>
        <dbReference type="PDB" id="8IEX"/>
    </source>
</evidence>
<feature type="chain" id="PRO_0000133653" description="Probable WRKY transcription factor 11">
    <location>
        <begin position="1"/>
        <end position="325"/>
    </location>
</feature>
<feature type="DNA-binding region" description="WRKY" evidence="2">
    <location>
        <begin position="240"/>
        <end position="306"/>
    </location>
</feature>
<feature type="splice variant" id="VSP_009108" description="In isoform 2." evidence="5 6">
    <location>
        <position position="223"/>
    </location>
</feature>
<feature type="sequence conflict" description="In Ref. 4; AAL24088." evidence="7" ref="4">
    <original>Y</original>
    <variation>N</variation>
    <location>
        <position position="268"/>
    </location>
</feature>
<feature type="sequence conflict" description="In Ref. 5; AAM61419." evidence="7" ref="5">
    <location>
        <position position="291"/>
    </location>
</feature>
<feature type="strand" evidence="8">
    <location>
        <begin position="228"/>
        <end position="233"/>
    </location>
</feature>
<feature type="strand" evidence="8">
    <location>
        <begin position="236"/>
        <end position="240"/>
    </location>
</feature>
<feature type="strand" evidence="8">
    <location>
        <begin position="251"/>
        <end position="259"/>
    </location>
</feature>
<feature type="strand" evidence="8">
    <location>
        <begin position="262"/>
        <end position="271"/>
    </location>
</feature>
<feature type="strand" evidence="8">
    <location>
        <begin position="280"/>
        <end position="285"/>
    </location>
</feature>
<feature type="strand" evidence="8">
    <location>
        <begin position="293"/>
        <end position="299"/>
    </location>
</feature>
<gene>
    <name type="primary">WRKY11</name>
    <name type="ordered locus">At4g31550</name>
    <name type="ORF">F3L17.120</name>
</gene>
<reference key="1">
    <citation type="submission" date="2001-08" db="EMBL/GenBank/DDBJ databases">
        <authorList>
            <person name="Ulker B."/>
            <person name="Kushnir S."/>
            <person name="Somssich I.E."/>
        </authorList>
    </citation>
    <scope>NUCLEOTIDE SEQUENCE [MRNA] (ISOFORM 1)</scope>
    <source>
        <strain>cv. Columbia</strain>
        <tissue>Flower</tissue>
    </source>
</reference>
<reference key="2">
    <citation type="journal article" date="1999" name="Nature">
        <title>Sequence and analysis of chromosome 4 of the plant Arabidopsis thaliana.</title>
        <authorList>
            <person name="Mayer K.F.X."/>
            <person name="Schueller C."/>
            <person name="Wambutt R."/>
            <person name="Murphy G."/>
            <person name="Volckaert G."/>
            <person name="Pohl T."/>
            <person name="Duesterhoeft A."/>
            <person name="Stiekema W."/>
            <person name="Entian K.-D."/>
            <person name="Terryn N."/>
            <person name="Harris B."/>
            <person name="Ansorge W."/>
            <person name="Brandt P."/>
            <person name="Grivell L.A."/>
            <person name="Rieger M."/>
            <person name="Weichselgartner M."/>
            <person name="de Simone V."/>
            <person name="Obermaier B."/>
            <person name="Mache R."/>
            <person name="Mueller M."/>
            <person name="Kreis M."/>
            <person name="Delseny M."/>
            <person name="Puigdomenech P."/>
            <person name="Watson M."/>
            <person name="Schmidtheini T."/>
            <person name="Reichert B."/>
            <person name="Portetelle D."/>
            <person name="Perez-Alonso M."/>
            <person name="Boutry M."/>
            <person name="Bancroft I."/>
            <person name="Vos P."/>
            <person name="Hoheisel J."/>
            <person name="Zimmermann W."/>
            <person name="Wedler H."/>
            <person name="Ridley P."/>
            <person name="Langham S.-A."/>
            <person name="McCullagh B."/>
            <person name="Bilham L."/>
            <person name="Robben J."/>
            <person name="van der Schueren J."/>
            <person name="Grymonprez B."/>
            <person name="Chuang Y.-J."/>
            <person name="Vandenbussche F."/>
            <person name="Braeken M."/>
            <person name="Weltjens I."/>
            <person name="Voet M."/>
            <person name="Bastiaens I."/>
            <person name="Aert R."/>
            <person name="Defoor E."/>
            <person name="Weitzenegger T."/>
            <person name="Bothe G."/>
            <person name="Ramsperger U."/>
            <person name="Hilbert H."/>
            <person name="Braun M."/>
            <person name="Holzer E."/>
            <person name="Brandt A."/>
            <person name="Peters S."/>
            <person name="van Staveren M."/>
            <person name="Dirkse W."/>
            <person name="Mooijman P."/>
            <person name="Klein Lankhorst R."/>
            <person name="Rose M."/>
            <person name="Hauf J."/>
            <person name="Koetter P."/>
            <person name="Berneiser S."/>
            <person name="Hempel S."/>
            <person name="Feldpausch M."/>
            <person name="Lamberth S."/>
            <person name="Van den Daele H."/>
            <person name="De Keyser A."/>
            <person name="Buysshaert C."/>
            <person name="Gielen J."/>
            <person name="Villarroel R."/>
            <person name="De Clercq R."/>
            <person name="van Montagu M."/>
            <person name="Rogers J."/>
            <person name="Cronin A."/>
            <person name="Quail M.A."/>
            <person name="Bray-Allen S."/>
            <person name="Clark L."/>
            <person name="Doggett J."/>
            <person name="Hall S."/>
            <person name="Kay M."/>
            <person name="Lennard N."/>
            <person name="McLay K."/>
            <person name="Mayes R."/>
            <person name="Pettett A."/>
            <person name="Rajandream M.A."/>
            <person name="Lyne M."/>
            <person name="Benes V."/>
            <person name="Rechmann S."/>
            <person name="Borkova D."/>
            <person name="Bloecker H."/>
            <person name="Scharfe M."/>
            <person name="Grimm M."/>
            <person name="Loehnert T.-H."/>
            <person name="Dose S."/>
            <person name="de Haan M."/>
            <person name="Maarse A.C."/>
            <person name="Schaefer M."/>
            <person name="Mueller-Auer S."/>
            <person name="Gabel C."/>
            <person name="Fuchs M."/>
            <person name="Fartmann B."/>
            <person name="Granderath K."/>
            <person name="Dauner D."/>
            <person name="Herzl A."/>
            <person name="Neumann S."/>
            <person name="Argiriou A."/>
            <person name="Vitale D."/>
            <person name="Liguori R."/>
            <person name="Piravandi E."/>
            <person name="Massenet O."/>
            <person name="Quigley F."/>
            <person name="Clabauld G."/>
            <person name="Muendlein A."/>
            <person name="Felber R."/>
            <person name="Schnabl S."/>
            <person name="Hiller R."/>
            <person name="Schmidt W."/>
            <person name="Lecharny A."/>
            <person name="Aubourg S."/>
            <person name="Chefdor F."/>
            <person name="Cooke R."/>
            <person name="Berger C."/>
            <person name="Monfort A."/>
            <person name="Casacuberta E."/>
            <person name="Gibbons T."/>
            <person name="Weber N."/>
            <person name="Vandenbol M."/>
            <person name="Bargues M."/>
            <person name="Terol J."/>
            <person name="Torres A."/>
            <person name="Perez-Perez A."/>
            <person name="Purnelle B."/>
            <person name="Bent E."/>
            <person name="Johnson S."/>
            <person name="Tacon D."/>
            <person name="Jesse T."/>
            <person name="Heijnen L."/>
            <person name="Schwarz S."/>
            <person name="Scholler P."/>
            <person name="Heber S."/>
            <person name="Francs P."/>
            <person name="Bielke C."/>
            <person name="Frishman D."/>
            <person name="Haase D."/>
            <person name="Lemcke K."/>
            <person name="Mewes H.-W."/>
            <person name="Stocker S."/>
            <person name="Zaccaria P."/>
            <person name="Bevan M."/>
            <person name="Wilson R.K."/>
            <person name="de la Bastide M."/>
            <person name="Habermann K."/>
            <person name="Parnell L."/>
            <person name="Dedhia N."/>
            <person name="Gnoj L."/>
            <person name="Schutz K."/>
            <person name="Huang E."/>
            <person name="Spiegel L."/>
            <person name="Sekhon M."/>
            <person name="Murray J."/>
            <person name="Sheet P."/>
            <person name="Cordes M."/>
            <person name="Abu-Threideh J."/>
            <person name="Stoneking T."/>
            <person name="Kalicki J."/>
            <person name="Graves T."/>
            <person name="Harmon G."/>
            <person name="Edwards J."/>
            <person name="Latreille P."/>
            <person name="Courtney L."/>
            <person name="Cloud J."/>
            <person name="Abbott A."/>
            <person name="Scott K."/>
            <person name="Johnson D."/>
            <person name="Minx P."/>
            <person name="Bentley D."/>
            <person name="Fulton B."/>
            <person name="Miller N."/>
            <person name="Greco T."/>
            <person name="Kemp K."/>
            <person name="Kramer J."/>
            <person name="Fulton L."/>
            <person name="Mardis E."/>
            <person name="Dante M."/>
            <person name="Pepin K."/>
            <person name="Hillier L.W."/>
            <person name="Nelson J."/>
            <person name="Spieth J."/>
            <person name="Ryan E."/>
            <person name="Andrews S."/>
            <person name="Geisel C."/>
            <person name="Layman D."/>
            <person name="Du H."/>
            <person name="Ali J."/>
            <person name="Berghoff A."/>
            <person name="Jones K."/>
            <person name="Drone K."/>
            <person name="Cotton M."/>
            <person name="Joshu C."/>
            <person name="Antonoiu B."/>
            <person name="Zidanic M."/>
            <person name="Strong C."/>
            <person name="Sun H."/>
            <person name="Lamar B."/>
            <person name="Yordan C."/>
            <person name="Ma P."/>
            <person name="Zhong J."/>
            <person name="Preston R."/>
            <person name="Vil D."/>
            <person name="Shekher M."/>
            <person name="Matero A."/>
            <person name="Shah R."/>
            <person name="Swaby I.K."/>
            <person name="O'Shaughnessy A."/>
            <person name="Rodriguez M."/>
            <person name="Hoffman J."/>
            <person name="Till S."/>
            <person name="Granat S."/>
            <person name="Shohdy N."/>
            <person name="Hasegawa A."/>
            <person name="Hameed A."/>
            <person name="Lodhi M."/>
            <person name="Johnson A."/>
            <person name="Chen E."/>
            <person name="Marra M.A."/>
            <person name="Martienssen R."/>
            <person name="McCombie W.R."/>
        </authorList>
    </citation>
    <scope>NUCLEOTIDE SEQUENCE [LARGE SCALE GENOMIC DNA]</scope>
    <source>
        <strain>cv. Columbia</strain>
    </source>
</reference>
<reference key="3">
    <citation type="journal article" date="2017" name="Plant J.">
        <title>Araport11: a complete reannotation of the Arabidopsis thaliana reference genome.</title>
        <authorList>
            <person name="Cheng C.Y."/>
            <person name="Krishnakumar V."/>
            <person name="Chan A.P."/>
            <person name="Thibaud-Nissen F."/>
            <person name="Schobel S."/>
            <person name="Town C.D."/>
        </authorList>
    </citation>
    <scope>GENOME REANNOTATION</scope>
    <source>
        <strain>cv. Columbia</strain>
    </source>
</reference>
<reference key="4">
    <citation type="journal article" date="2003" name="Science">
        <title>Empirical analysis of transcriptional activity in the Arabidopsis genome.</title>
        <authorList>
            <person name="Yamada K."/>
            <person name="Lim J."/>
            <person name="Dale J.M."/>
            <person name="Chen H."/>
            <person name="Shinn P."/>
            <person name="Palm C.J."/>
            <person name="Southwick A.M."/>
            <person name="Wu H.C."/>
            <person name="Kim C.J."/>
            <person name="Nguyen M."/>
            <person name="Pham P.K."/>
            <person name="Cheuk R.F."/>
            <person name="Karlin-Newmann G."/>
            <person name="Liu S.X."/>
            <person name="Lam B."/>
            <person name="Sakano H."/>
            <person name="Wu T."/>
            <person name="Yu G."/>
            <person name="Miranda M."/>
            <person name="Quach H.L."/>
            <person name="Tripp M."/>
            <person name="Chang C.H."/>
            <person name="Lee J.M."/>
            <person name="Toriumi M.J."/>
            <person name="Chan M.M."/>
            <person name="Tang C.C."/>
            <person name="Onodera C.S."/>
            <person name="Deng J.M."/>
            <person name="Akiyama K."/>
            <person name="Ansari Y."/>
            <person name="Arakawa T."/>
            <person name="Banh J."/>
            <person name="Banno F."/>
            <person name="Bowser L."/>
            <person name="Brooks S.Y."/>
            <person name="Carninci P."/>
            <person name="Chao Q."/>
            <person name="Choy N."/>
            <person name="Enju A."/>
            <person name="Goldsmith A.D."/>
            <person name="Gurjal M."/>
            <person name="Hansen N.F."/>
            <person name="Hayashizaki Y."/>
            <person name="Johnson-Hopson C."/>
            <person name="Hsuan V.W."/>
            <person name="Iida K."/>
            <person name="Karnes M."/>
            <person name="Khan S."/>
            <person name="Koesema E."/>
            <person name="Ishida J."/>
            <person name="Jiang P.X."/>
            <person name="Jones T."/>
            <person name="Kawai J."/>
            <person name="Kamiya A."/>
            <person name="Meyers C."/>
            <person name="Nakajima M."/>
            <person name="Narusaka M."/>
            <person name="Seki M."/>
            <person name="Sakurai T."/>
            <person name="Satou M."/>
            <person name="Tamse R."/>
            <person name="Vaysberg M."/>
            <person name="Wallender E.K."/>
            <person name="Wong C."/>
            <person name="Yamamura Y."/>
            <person name="Yuan S."/>
            <person name="Shinozaki K."/>
            <person name="Davis R.W."/>
            <person name="Theologis A."/>
            <person name="Ecker J.R."/>
        </authorList>
    </citation>
    <scope>NUCLEOTIDE SEQUENCE [LARGE SCALE MRNA] (ISOFORMS 1 AND 2)</scope>
    <source>
        <strain>cv. Columbia</strain>
    </source>
</reference>
<reference key="5">
    <citation type="submission" date="2002-03" db="EMBL/GenBank/DDBJ databases">
        <title>Full-length cDNA from Arabidopsis thaliana.</title>
        <authorList>
            <person name="Brover V.V."/>
            <person name="Troukhan M.E."/>
            <person name="Alexandrov N.A."/>
            <person name="Lu Y.-P."/>
            <person name="Flavell R.B."/>
            <person name="Feldmann K.A."/>
        </authorList>
    </citation>
    <scope>NUCLEOTIDE SEQUENCE [LARGE SCALE MRNA] (ISOFORM 2)</scope>
</reference>
<reference key="6">
    <citation type="journal article" date="2001" name="Plant J.">
        <title>A new member of the Arabidopsis WRKY transcription factor family, AtWRKY6, is associated with both senescence- and defence-related processes.</title>
        <authorList>
            <person name="Robatzek S."/>
            <person name="Somssich I.E."/>
        </authorList>
    </citation>
    <scope>TISSUE SPECIFICITY</scope>
    <scope>INDUCTION</scope>
</reference>
<reference key="7">
    <citation type="journal article" date="2016" name="J. Exp. Bot.">
        <title>Transcription factors WRKY70 and WRKY11 served as regulators in rhizobacterium Bacillus cereus AR156-induced systemic resistance to Pseudomonas syringae pv. tomato DC3000 in Arabidopsis.</title>
        <authorList>
            <person name="Jiang C.-H."/>
            <person name="Huang Z.-Y."/>
            <person name="Xie P."/>
            <person name="Gu C."/>
            <person name="Li K."/>
            <person name="Wang D.-C."/>
            <person name="Yu Y.-Y."/>
            <person name="Fan Z.-H."/>
            <person name="Wang C.-J."/>
            <person name="Wang Y.-P."/>
            <person name="Guo Y.-H."/>
            <person name="Guo J.-H."/>
        </authorList>
    </citation>
    <scope>FUNCTION</scope>
    <scope>DISRUPTION PHENOTYPE</scope>
    <scope>REPRESSION BY BACILLUS CEREUS AND PSEUDOMONAS FLUORESCENS</scope>
    <scope>SUBCELLULAR LOCATION</scope>
    <source>
        <strain>cv. Columbia</strain>
    </source>
</reference>
<comment type="function">
    <text evidence="1 4">Transcription factor. Interacts specifically with the W box (5'-(T)TGAC[CT]-3'), a frequently occurring elicitor-responsive cis-acting element (By similarity). Regulates rhizobacterium B.cereus AR156-induced systemic resistance (ISR) to P.syringae pv. tomato DC3000, probably by activating the jasmonic acid (JA)- signaling pathway (PubMed:26433201).</text>
</comment>
<comment type="subcellular location">
    <subcellularLocation>
        <location evidence="2 4">Nucleus</location>
    </subcellularLocation>
</comment>
<comment type="alternative products">
    <event type="alternative splicing"/>
    <isoform>
        <id>Q9SV15-1</id>
        <name>1</name>
        <sequence type="displayed"/>
    </isoform>
    <isoform>
        <id>Q9SV15-2</id>
        <name>2</name>
        <sequence type="described" ref="VSP_009108"/>
    </isoform>
</comment>
<comment type="tissue specificity">
    <text evidence="3">In young, mature and senescent leaves.</text>
</comment>
<comment type="induction">
    <text evidence="3 4">Strongly during leaf senescence (PubMed:11722756). Repressed by rhizobacterium B.cereus AR156 in leaves, and to a lower extent, by P.fluorescens WCS417r (PubMed:26433201).</text>
</comment>
<comment type="disruption phenotype">
    <text evidence="4">Reduced rhizobacterium B.cereus AR156-induced systemic resistance (ISR) to P.syringae pv. tomato DC3000 associated with reduced jasmonic acid (JA)-mediated signal pathway. Plants lacking both WRKY11 and WRKY70 are totally impaired in B.cereus AR156-mediated ISR.</text>
</comment>
<comment type="similarity">
    <text evidence="7">Belongs to the WRKY group II-d family.</text>
</comment>